<proteinExistence type="evidence at transcript level"/>
<keyword id="KW-0416">Keratin</keyword>
<keyword id="KW-1185">Reference proteome</keyword>
<keyword id="KW-0677">Repeat</keyword>
<gene>
    <name type="primary">KRTAP2-2</name>
    <name type="synonym">KAP2.2</name>
    <name type="synonym">KRTAP2.2</name>
</gene>
<evidence type="ECO:0000250" key="1"/>
<evidence type="ECO:0000305" key="2"/>
<name>KRA22_HUMAN</name>
<organism>
    <name type="scientific">Homo sapiens</name>
    <name type="common">Human</name>
    <dbReference type="NCBI Taxonomy" id="9606"/>
    <lineage>
        <taxon>Eukaryota</taxon>
        <taxon>Metazoa</taxon>
        <taxon>Chordata</taxon>
        <taxon>Craniata</taxon>
        <taxon>Vertebrata</taxon>
        <taxon>Euteleostomi</taxon>
        <taxon>Mammalia</taxon>
        <taxon>Eutheria</taxon>
        <taxon>Euarchontoglires</taxon>
        <taxon>Primates</taxon>
        <taxon>Haplorrhini</taxon>
        <taxon>Catarrhini</taxon>
        <taxon>Hominidae</taxon>
        <taxon>Homo</taxon>
    </lineage>
</organism>
<protein>
    <recommendedName>
        <fullName>Keratin-associated protein 2-2</fullName>
    </recommendedName>
    <alternativeName>
        <fullName>High sulfur keratin-associated protein 2.2</fullName>
    </alternativeName>
    <alternativeName>
        <fullName>Keratin-associated protein 2.2</fullName>
    </alternativeName>
</protein>
<accession>Q9BYT5</accession>
<accession>A8MTN3</accession>
<accession>A8MXM4</accession>
<feature type="chain" id="PRO_0000331451" description="Keratin-associated protein 2-2">
    <location>
        <begin position="1"/>
        <end position="123"/>
    </location>
</feature>
<feature type="region of interest" description="11 X 5 AA repeats of C-C-[CDPQRWG]-[APRS]-[CIPSTVD]">
    <location>
        <begin position="5"/>
        <end position="112"/>
    </location>
</feature>
<feature type="sequence conflict" description="In Ref. 2; no nucleotide entry." evidence="2" ref="2">
    <original>R</original>
    <variation>C</variation>
    <location>
        <position position="59"/>
    </location>
</feature>
<sequence length="123" mass="12957">MTGSCCGSTFSSLSYGGGCCQPCCCRDPCCCRPVTCQTTVCRPVTCVPRCTRPICEPCRRPVCCDPCSLQEGCCRPITCCPSSCTAVVCRPCCWATTCCQPVSVQSPCGQPTPCSTTCRTSSC</sequence>
<reference key="1">
    <citation type="journal article" date="2006" name="Nature">
        <title>DNA sequence of human chromosome 17 and analysis of rearrangement in the human lineage.</title>
        <authorList>
            <person name="Zody M.C."/>
            <person name="Garber M."/>
            <person name="Adams D.J."/>
            <person name="Sharpe T."/>
            <person name="Harrow J."/>
            <person name="Lupski J.R."/>
            <person name="Nicholson C."/>
            <person name="Searle S.M."/>
            <person name="Wilming L."/>
            <person name="Young S.K."/>
            <person name="Abouelleil A."/>
            <person name="Allen N.R."/>
            <person name="Bi W."/>
            <person name="Bloom T."/>
            <person name="Borowsky M.L."/>
            <person name="Bugalter B.E."/>
            <person name="Butler J."/>
            <person name="Chang J.L."/>
            <person name="Chen C.-K."/>
            <person name="Cook A."/>
            <person name="Corum B."/>
            <person name="Cuomo C.A."/>
            <person name="de Jong P.J."/>
            <person name="DeCaprio D."/>
            <person name="Dewar K."/>
            <person name="FitzGerald M."/>
            <person name="Gilbert J."/>
            <person name="Gibson R."/>
            <person name="Gnerre S."/>
            <person name="Goldstein S."/>
            <person name="Grafham D.V."/>
            <person name="Grocock R."/>
            <person name="Hafez N."/>
            <person name="Hagopian D.S."/>
            <person name="Hart E."/>
            <person name="Norman C.H."/>
            <person name="Humphray S."/>
            <person name="Jaffe D.B."/>
            <person name="Jones M."/>
            <person name="Kamal M."/>
            <person name="Khodiyar V.K."/>
            <person name="LaButti K."/>
            <person name="Laird G."/>
            <person name="Lehoczky J."/>
            <person name="Liu X."/>
            <person name="Lokyitsang T."/>
            <person name="Loveland J."/>
            <person name="Lui A."/>
            <person name="Macdonald P."/>
            <person name="Major J.E."/>
            <person name="Matthews L."/>
            <person name="Mauceli E."/>
            <person name="McCarroll S.A."/>
            <person name="Mihalev A.H."/>
            <person name="Mudge J."/>
            <person name="Nguyen C."/>
            <person name="Nicol R."/>
            <person name="O'Leary S.B."/>
            <person name="Osoegawa K."/>
            <person name="Schwartz D.C."/>
            <person name="Shaw-Smith C."/>
            <person name="Stankiewicz P."/>
            <person name="Steward C."/>
            <person name="Swarbreck D."/>
            <person name="Venkataraman V."/>
            <person name="Whittaker C.A."/>
            <person name="Yang X."/>
            <person name="Zimmer A.R."/>
            <person name="Bradley A."/>
            <person name="Hubbard T."/>
            <person name="Birren B.W."/>
            <person name="Rogers J."/>
            <person name="Lander E.S."/>
            <person name="Nusbaum C."/>
        </authorList>
    </citation>
    <scope>NUCLEOTIDE SEQUENCE [LARGE SCALE GENOMIC DNA]</scope>
</reference>
<reference key="2">
    <citation type="journal article" date="2001" name="J. Biol. Chem.">
        <title>Characterization of a cluster of human high/ultrahigh sulfur keratin-associated protein genes embedded in the type I keratin gene domain on chromosome 17q12-21.</title>
        <authorList>
            <person name="Rogers M.A."/>
            <person name="Langbein L."/>
            <person name="Winter H."/>
            <person name="Ehmann C."/>
            <person name="Praetzel S."/>
            <person name="Korn B."/>
            <person name="Schweizer J."/>
        </authorList>
    </citation>
    <scope>NUCLEOTIDE SEQUENCE [MRNA] OF 44-123</scope>
    <source>
        <tissue>Scalp</tissue>
    </source>
</reference>
<comment type="function">
    <text evidence="1">In the hair cortex, hair keratin intermediate filaments are embedded in an interfilamentous matrix, consisting of hair keratin-associated proteins (KRTAP), which are essential for the formation of a rigid and resistant hair shaft through their extensive disulfide bond cross-linking with abundant cysteine residues of hair keratins. The matrix proteins include the high-sulfur and high-glycine-tyrosine keratins (By similarity).</text>
</comment>
<comment type="subunit">
    <text evidence="1">Interacts with hair keratins.</text>
</comment>
<comment type="similarity">
    <text evidence="2">Belongs to the KRTAP type 2 family.</text>
</comment>
<comment type="sequence caution" evidence="2">
    <conflict type="miscellaneous discrepancy">
        <sequence resource="EMBL-CDS" id="CAC27564"/>
    </conflict>
    <text>Chimeric cDNA. The N-terminal part is identical to the product of the KRTAP2-3 gene.</text>
</comment>
<dbReference type="EMBL" id="AC100808">
    <property type="status" value="NOT_ANNOTATED_CDS"/>
    <property type="molecule type" value="Genomic_DNA"/>
</dbReference>
<dbReference type="EMBL" id="AJ302536">
    <property type="protein sequence ID" value="CAC27564.1"/>
    <property type="status" value="ALT_SEQ"/>
    <property type="molecule type" value="mRNA"/>
</dbReference>
<dbReference type="RefSeq" id="NP_149021.2">
    <property type="nucleotide sequence ID" value="NM_033032.3"/>
</dbReference>
<dbReference type="BioGRID" id="608708">
    <property type="interactions" value="3"/>
</dbReference>
<dbReference type="FunCoup" id="Q9BYT5">
    <property type="interactions" value="10"/>
</dbReference>
<dbReference type="STRING" id="9606.ENSP00000381494"/>
<dbReference type="BioMuta" id="KRTAP2-2"/>
<dbReference type="DMDM" id="425906065"/>
<dbReference type="jPOST" id="Q9BYT5"/>
<dbReference type="MassIVE" id="Q9BYT5"/>
<dbReference type="PaxDb" id="9606-ENSP00000381494"/>
<dbReference type="PeptideAtlas" id="Q9BYT5"/>
<dbReference type="Ensembl" id="ENST00000398477.1">
    <property type="protein sequence ID" value="ENSP00000381494.1"/>
    <property type="gene ID" value="ENSG00000214518.4"/>
</dbReference>
<dbReference type="Ensembl" id="ENST00000709618.1">
    <property type="protein sequence ID" value="ENSP00000517803.1"/>
    <property type="gene ID" value="ENSG00000292054.1"/>
</dbReference>
<dbReference type="GeneID" id="728279"/>
<dbReference type="KEGG" id="hsa:728279"/>
<dbReference type="MANE-Select" id="ENST00000398477.1">
    <property type="protein sequence ID" value="ENSP00000381494.1"/>
    <property type="RefSeq nucleotide sequence ID" value="NM_033032.3"/>
    <property type="RefSeq protein sequence ID" value="NP_149021.2"/>
</dbReference>
<dbReference type="UCSC" id="uc010cxj.4">
    <property type="organism name" value="human"/>
</dbReference>
<dbReference type="AGR" id="HGNC:18905"/>
<dbReference type="CTD" id="728279"/>
<dbReference type="GeneCards" id="KRTAP2-2"/>
<dbReference type="HGNC" id="HGNC:18905">
    <property type="gene designation" value="KRTAP2-2"/>
</dbReference>
<dbReference type="HPA" id="ENSG00000214518">
    <property type="expression patterns" value="Tissue enriched (skin)"/>
</dbReference>
<dbReference type="neXtProt" id="NX_Q9BYT5"/>
<dbReference type="OpenTargets" id="ENSG00000214518"/>
<dbReference type="PharmGKB" id="PA38753"/>
<dbReference type="VEuPathDB" id="HostDB:ENSG00000214518"/>
<dbReference type="eggNOG" id="KOG4726">
    <property type="taxonomic scope" value="Eukaryota"/>
</dbReference>
<dbReference type="GeneTree" id="ENSGT00940000162736"/>
<dbReference type="HOGENOM" id="CLU_113141_3_0_1"/>
<dbReference type="InParanoid" id="Q9BYT5"/>
<dbReference type="OrthoDB" id="9629171at2759"/>
<dbReference type="PAN-GO" id="Q9BYT5">
    <property type="GO annotations" value="0 GO annotations based on evolutionary models"/>
</dbReference>
<dbReference type="PhylomeDB" id="Q9BYT5"/>
<dbReference type="PathwayCommons" id="Q9BYT5"/>
<dbReference type="Reactome" id="R-HSA-6805567">
    <property type="pathway name" value="Keratinization"/>
</dbReference>
<dbReference type="BioGRID-ORCS" id="728279">
    <property type="hits" value="26 hits in 644 CRISPR screens"/>
</dbReference>
<dbReference type="GenomeRNAi" id="728279"/>
<dbReference type="Pharos" id="Q9BYT5">
    <property type="development level" value="Tdark"/>
</dbReference>
<dbReference type="PRO" id="PR:Q9BYT5"/>
<dbReference type="Proteomes" id="UP000005640">
    <property type="component" value="Chromosome 17"/>
</dbReference>
<dbReference type="RNAct" id="Q9BYT5">
    <property type="molecule type" value="protein"/>
</dbReference>
<dbReference type="Bgee" id="ENSG00000214518">
    <property type="expression patterns" value="Expressed in skin of abdomen and 30 other cell types or tissues"/>
</dbReference>
<dbReference type="ExpressionAtlas" id="Q9BYT5">
    <property type="expression patterns" value="baseline and differential"/>
</dbReference>
<dbReference type="GO" id="GO:0005829">
    <property type="term" value="C:cytosol"/>
    <property type="evidence" value="ECO:0000304"/>
    <property type="project" value="Reactome"/>
</dbReference>
<dbReference type="GO" id="GO:0045095">
    <property type="term" value="C:keratin filament"/>
    <property type="evidence" value="ECO:0007669"/>
    <property type="project" value="InterPro"/>
</dbReference>
<dbReference type="InterPro" id="IPR002494">
    <property type="entry name" value="KAP"/>
</dbReference>
<dbReference type="InterPro" id="IPR052154">
    <property type="entry name" value="KRTAP_type_2-like"/>
</dbReference>
<dbReference type="PANTHER" id="PTHR48425">
    <property type="entry name" value="KERATIN-ASSOCIATED PROTEIN 2-1"/>
    <property type="match status" value="1"/>
</dbReference>
<dbReference type="PANTHER" id="PTHR48425:SF1">
    <property type="entry name" value="KERATIN-ASSOCIATED PROTEIN 2-1"/>
    <property type="match status" value="1"/>
</dbReference>
<dbReference type="Pfam" id="PF01500">
    <property type="entry name" value="Keratin_B2"/>
    <property type="match status" value="1"/>
</dbReference>